<dbReference type="EMBL" id="AF107729">
    <property type="protein sequence ID" value="AAF15392.2"/>
    <property type="status" value="ALT_INIT"/>
    <property type="molecule type" value="mRNA"/>
</dbReference>
<dbReference type="SMR" id="Q9TTF0"/>
<dbReference type="CORUM" id="Q9TTF0"/>
<dbReference type="FunCoup" id="Q9TTF0">
    <property type="interactions" value="55"/>
</dbReference>
<dbReference type="STRING" id="9913.ENSBTAP00000018926"/>
<dbReference type="PaxDb" id="9913-ENSBTAP00000018926"/>
<dbReference type="eggNOG" id="KOG3575">
    <property type="taxonomic scope" value="Eukaryota"/>
</dbReference>
<dbReference type="InParanoid" id="Q9TTF0"/>
<dbReference type="OrthoDB" id="5774777at2759"/>
<dbReference type="Proteomes" id="UP000009136">
    <property type="component" value="Unplaced"/>
</dbReference>
<dbReference type="GO" id="GO:0005634">
    <property type="term" value="C:nucleus"/>
    <property type="evidence" value="ECO:0007669"/>
    <property type="project" value="UniProtKB-SubCell"/>
</dbReference>
<dbReference type="GO" id="GO:0004879">
    <property type="term" value="F:nuclear receptor activity"/>
    <property type="evidence" value="ECO:0000318"/>
    <property type="project" value="GO_Central"/>
</dbReference>
<dbReference type="GO" id="GO:0000978">
    <property type="term" value="F:RNA polymerase II cis-regulatory region sequence-specific DNA binding"/>
    <property type="evidence" value="ECO:0000318"/>
    <property type="project" value="GO_Central"/>
</dbReference>
<dbReference type="GO" id="GO:0008270">
    <property type="term" value="F:zinc ion binding"/>
    <property type="evidence" value="ECO:0007669"/>
    <property type="project" value="UniProtKB-KW"/>
</dbReference>
<dbReference type="GO" id="GO:0030182">
    <property type="term" value="P:neuron differentiation"/>
    <property type="evidence" value="ECO:0000318"/>
    <property type="project" value="GO_Central"/>
</dbReference>
<dbReference type="GO" id="GO:0045944">
    <property type="term" value="P:positive regulation of transcription by RNA polymerase II"/>
    <property type="evidence" value="ECO:0000318"/>
    <property type="project" value="GO_Central"/>
</dbReference>
<dbReference type="CDD" id="cd06970">
    <property type="entry name" value="NR_DBD_PNR"/>
    <property type="match status" value="1"/>
</dbReference>
<dbReference type="CDD" id="cd06950">
    <property type="entry name" value="NR_LBD_Tlx_PNR_like"/>
    <property type="match status" value="1"/>
</dbReference>
<dbReference type="FunFam" id="1.10.565.10:FF:000022">
    <property type="entry name" value="Nuclear receptor subfamily 2 group E member 3"/>
    <property type="match status" value="1"/>
</dbReference>
<dbReference type="FunFam" id="3.30.50.10:FF:000028">
    <property type="entry name" value="Nuclear receptor subfamily 2, group E, member 3"/>
    <property type="match status" value="1"/>
</dbReference>
<dbReference type="Gene3D" id="3.30.50.10">
    <property type="entry name" value="Erythroid Transcription Factor GATA-1, subunit A"/>
    <property type="match status" value="1"/>
</dbReference>
<dbReference type="Gene3D" id="1.10.565.10">
    <property type="entry name" value="Retinoid X Receptor"/>
    <property type="match status" value="1"/>
</dbReference>
<dbReference type="InterPro" id="IPR035500">
    <property type="entry name" value="NHR-like_dom_sf"/>
</dbReference>
<dbReference type="InterPro" id="IPR000536">
    <property type="entry name" value="Nucl_hrmn_rcpt_lig-bd"/>
</dbReference>
<dbReference type="InterPro" id="IPR050274">
    <property type="entry name" value="Nuclear_hormone_rcpt_NR2"/>
</dbReference>
<dbReference type="InterPro" id="IPR001723">
    <property type="entry name" value="Nuclear_hrmn_rcpt"/>
</dbReference>
<dbReference type="InterPro" id="IPR001628">
    <property type="entry name" value="Znf_hrmn_rcpt"/>
</dbReference>
<dbReference type="InterPro" id="IPR013088">
    <property type="entry name" value="Znf_NHR/GATA"/>
</dbReference>
<dbReference type="PANTHER" id="PTHR24083">
    <property type="entry name" value="NUCLEAR HORMONE RECEPTOR"/>
    <property type="match status" value="1"/>
</dbReference>
<dbReference type="Pfam" id="PF00104">
    <property type="entry name" value="Hormone_recep"/>
    <property type="match status" value="1"/>
</dbReference>
<dbReference type="Pfam" id="PF00105">
    <property type="entry name" value="zf-C4"/>
    <property type="match status" value="1"/>
</dbReference>
<dbReference type="PRINTS" id="PR00398">
    <property type="entry name" value="STRDHORMONER"/>
</dbReference>
<dbReference type="PRINTS" id="PR00047">
    <property type="entry name" value="STROIDFINGER"/>
</dbReference>
<dbReference type="SMART" id="SM00430">
    <property type="entry name" value="HOLI"/>
    <property type="match status" value="1"/>
</dbReference>
<dbReference type="SMART" id="SM00399">
    <property type="entry name" value="ZnF_C4"/>
    <property type="match status" value="1"/>
</dbReference>
<dbReference type="SUPFAM" id="SSF57716">
    <property type="entry name" value="Glucocorticoid receptor-like (DNA-binding domain)"/>
    <property type="match status" value="1"/>
</dbReference>
<dbReference type="SUPFAM" id="SSF48508">
    <property type="entry name" value="Nuclear receptor ligand-binding domain"/>
    <property type="match status" value="1"/>
</dbReference>
<dbReference type="PROSITE" id="PS51843">
    <property type="entry name" value="NR_LBD"/>
    <property type="match status" value="1"/>
</dbReference>
<dbReference type="PROSITE" id="PS00031">
    <property type="entry name" value="NUCLEAR_REC_DBD_1"/>
    <property type="match status" value="1"/>
</dbReference>
<dbReference type="PROSITE" id="PS51030">
    <property type="entry name" value="NUCLEAR_REC_DBD_2"/>
    <property type="match status" value="1"/>
</dbReference>
<sequence>MSSNVAAAVPAAVSASRKESPGRWGLGEEPTGVGPSLQCRVCGDSSSGKHYGIYACNGCSGFFKRSVRRRLIYRCQVGAGMCPVDKAHRNQCQACRLKKCLQAGMNQDAVQNERQPRSTAQVRMDSVESETEPRLQPLATPPALAGPSSRGPTPVSAARALGPQALMPPGHHHFMASLITAETCTKLEPEDADENIDVTSNDPEFPSSPYSSSSPCALDSIHETSARLLFMAVKWAKNLPVFSNLPFRDQVILLEEAWSELFLLGAIQWSLPLDNCPLLALPEASAGGSSQGRLVLASAETRILQETISRFRALAVDPTEFACMKALVLFKPETRGLKDPEHVEALQDQSQVMLSQHSKAHHPSQLVRFGKLLLLLPSLRFISSERVELLFFRKTIGNTPMEKLLCDMFKN</sequence>
<reference key="1">
    <citation type="journal article" date="2001" name="J. Neuroophthalmol.">
        <title>The photoreceptor cell-specific nuclear receptor is an autoantigen of paraneoplastic retinopathy.</title>
        <authorList>
            <person name="Eichen J.G."/>
            <person name="Dalmau J."/>
            <person name="Demopoulos A."/>
            <person name="Wade D."/>
            <person name="Posner J.B."/>
            <person name="Rosenfeld M.R."/>
        </authorList>
    </citation>
    <scope>NUCLEOTIDE SEQUENCE [MRNA]</scope>
    <source>
        <tissue>Retina</tissue>
    </source>
</reference>
<reference key="2">
    <citation type="journal article" date="2004" name="Hum. Mol. Genet.">
        <title>Photoreceptor-specific nuclear receptor NR2E3 functions as a transcriptional activator in rod photoreceptors.</title>
        <authorList>
            <person name="Cheng H."/>
            <person name="Khanna H."/>
            <person name="Oh E.C."/>
            <person name="Hicks D."/>
            <person name="Mitton K.P."/>
            <person name="Swaroop A."/>
        </authorList>
    </citation>
    <scope>INTERACTION WITH NR1D1</scope>
    <scope>IDENTIFICATION IN ROD PHOTORECEPTOR COMPLEX</scope>
</reference>
<protein>
    <recommendedName>
        <fullName>Photoreceptor-specific nuclear receptor</fullName>
    </recommendedName>
    <alternativeName>
        <fullName>Nuclear receptor subfamily 2 group E member 3</fullName>
    </alternativeName>
    <alternativeName>
        <fullName>Retina-specific nuclear receptor</fullName>
    </alternativeName>
</protein>
<feature type="chain" id="PRO_0000387611" description="Photoreceptor-specific nuclear receptor">
    <location>
        <begin position="1"/>
        <end position="411"/>
    </location>
</feature>
<feature type="domain" description="NR LBD" evidence="5">
    <location>
        <begin position="170"/>
        <end position="411"/>
    </location>
</feature>
<feature type="DNA-binding region" description="Nuclear receptor" evidence="4">
    <location>
        <begin position="36"/>
        <end position="112"/>
    </location>
</feature>
<feature type="zinc finger region" description="NR C4-type" evidence="4">
    <location>
        <begin position="39"/>
        <end position="59"/>
    </location>
</feature>
<feature type="zinc finger region" description="NR C4-type" evidence="4">
    <location>
        <begin position="75"/>
        <end position="95"/>
    </location>
</feature>
<feature type="region of interest" description="Disordered" evidence="6">
    <location>
        <begin position="108"/>
        <end position="157"/>
    </location>
</feature>
<feature type="compositionally biased region" description="Polar residues" evidence="6">
    <location>
        <begin position="108"/>
        <end position="121"/>
    </location>
</feature>
<feature type="cross-link" description="Glycyl lysine isopeptide (Lys-Gly) (interchain with G-Cter in SUMO)" evidence="1">
    <location>
        <position position="186"/>
    </location>
</feature>
<feature type="cross-link" description="Glycyl lysine isopeptide (Lys-Gly) (interchain with G-Cter in SUMO)" evidence="1">
    <location>
        <position position="331"/>
    </location>
</feature>
<feature type="cross-link" description="Glycyl lysine isopeptide (Lys-Gly) (interchain with G-Cter in SUMO)" evidence="1">
    <location>
        <position position="338"/>
    </location>
</feature>
<comment type="function">
    <text>Orphan nuclear receptor of retinal photoreceptor cells. Transcriptional factor that is an activator of rod development and repressor of cone development. Binds the promoter region of a number of rod- and cone-specific genes, including rhodopsin, M- and S-opsin and rod-specific phosphodiesterase beta subunit. Enhances rhodopsin expression. Represses M- and S-cone opsin expression.</text>
</comment>
<comment type="subunit">
    <text evidence="2 3 7">Homodimer. Interacts with PIAS3; the interaction sumoylates NR2E3 and promotes repression of cone-specific gene transcription and activation of rod-specific genes (By similarity). Component of a rod photoreceptor complex that includes NR2E3, NRL, CRX and NR1D1 (PubMed:15190009). Interacts with NR1D1 (PubMed:15190009). Interacts (via the DNA-binding domain) with CRX (via its DNA binding domain); the interaction represses S- and M-cone opsin expression (By similarity). Interacts with SAMD7 (By similarity).</text>
</comment>
<comment type="subcellular location">
    <subcellularLocation>
        <location evidence="4">Nucleus</location>
    </subcellularLocation>
</comment>
<comment type="PTM">
    <text>Di- and tri-sumoylated in developing retina. PIAS3-mediated sumoylation is required for repression of cone-specific gene expression and rod photoreceptor development. Sumoylation on Lys-186 appears to be the main site.</text>
</comment>
<comment type="similarity">
    <text evidence="8">Belongs to the nuclear hormone receptor family.</text>
</comment>
<comment type="sequence caution" evidence="8">
    <conflict type="erroneous initiation">
        <sequence resource="EMBL-CDS" id="AAF15392"/>
    </conflict>
</comment>
<evidence type="ECO:0000250" key="1"/>
<evidence type="ECO:0000250" key="2">
    <source>
        <dbReference type="UniProtKB" id="Q9QXZ7"/>
    </source>
</evidence>
<evidence type="ECO:0000250" key="3">
    <source>
        <dbReference type="UniProtKB" id="Q9Y5X4"/>
    </source>
</evidence>
<evidence type="ECO:0000255" key="4">
    <source>
        <dbReference type="PROSITE-ProRule" id="PRU00407"/>
    </source>
</evidence>
<evidence type="ECO:0000255" key="5">
    <source>
        <dbReference type="PROSITE-ProRule" id="PRU01189"/>
    </source>
</evidence>
<evidence type="ECO:0000256" key="6">
    <source>
        <dbReference type="SAM" id="MobiDB-lite"/>
    </source>
</evidence>
<evidence type="ECO:0000269" key="7">
    <source>
    </source>
</evidence>
<evidence type="ECO:0000305" key="8"/>
<accession>Q9TTF0</accession>
<keyword id="KW-0238">DNA-binding</keyword>
<keyword id="KW-1017">Isopeptide bond</keyword>
<keyword id="KW-0479">Metal-binding</keyword>
<keyword id="KW-0539">Nucleus</keyword>
<keyword id="KW-0675">Receptor</keyword>
<keyword id="KW-1185">Reference proteome</keyword>
<keyword id="KW-0804">Transcription</keyword>
<keyword id="KW-0805">Transcription regulation</keyword>
<keyword id="KW-0832">Ubl conjugation</keyword>
<keyword id="KW-0862">Zinc</keyword>
<keyword id="KW-0863">Zinc-finger</keyword>
<gene>
    <name type="primary">NR2E3</name>
</gene>
<proteinExistence type="evidence at protein level"/>
<organism>
    <name type="scientific">Bos taurus</name>
    <name type="common">Bovine</name>
    <dbReference type="NCBI Taxonomy" id="9913"/>
    <lineage>
        <taxon>Eukaryota</taxon>
        <taxon>Metazoa</taxon>
        <taxon>Chordata</taxon>
        <taxon>Craniata</taxon>
        <taxon>Vertebrata</taxon>
        <taxon>Euteleostomi</taxon>
        <taxon>Mammalia</taxon>
        <taxon>Eutheria</taxon>
        <taxon>Laurasiatheria</taxon>
        <taxon>Artiodactyla</taxon>
        <taxon>Ruminantia</taxon>
        <taxon>Pecora</taxon>
        <taxon>Bovidae</taxon>
        <taxon>Bovinae</taxon>
        <taxon>Bos</taxon>
    </lineage>
</organism>
<name>NR2E3_BOVIN</name>